<protein>
    <recommendedName>
        <fullName evidence="1">Large ribosomal subunit protein uL6</fullName>
    </recommendedName>
    <alternativeName>
        <fullName evidence="2">50S ribosomal protein L6</fullName>
    </alternativeName>
</protein>
<feature type="chain" id="PRO_1000166799" description="Large ribosomal subunit protein uL6">
    <location>
        <begin position="1"/>
        <end position="180"/>
    </location>
</feature>
<reference key="1">
    <citation type="submission" date="2008-10" db="EMBL/GenBank/DDBJ databases">
        <title>Genome sequence of Clostridium botulinum A2 Kyoto.</title>
        <authorList>
            <person name="Shrivastava S."/>
            <person name="Brinkac L.M."/>
            <person name="Brown J.L."/>
            <person name="Bruce D."/>
            <person name="Detter C.C."/>
            <person name="Johnson E.A."/>
            <person name="Munk C.A."/>
            <person name="Smith L.A."/>
            <person name="Smith T.J."/>
            <person name="Sutton G."/>
            <person name="Brettin T.S."/>
        </authorList>
    </citation>
    <scope>NUCLEOTIDE SEQUENCE [LARGE SCALE GENOMIC DNA]</scope>
    <source>
        <strain>Kyoto / Type A2</strain>
    </source>
</reference>
<proteinExistence type="inferred from homology"/>
<sequence length="180" mass="19527">MSRVGKLPVAIPNGVTVTVTPDNVVTVKGPKGELVKAMSNKINIAVEDNSVVVTRDNDHKDVRALHGLTRALVNNMVTGVNEGYVKTLELIGVGYRAQLQGKKLVLSLGFSHPVEMEAVSGVEFEVEGGTKVKVKGIDKELVGAVAADIRKWRKPEPYKGKGIKYENEVIRRKEGKTGKK</sequence>
<keyword id="KW-0687">Ribonucleoprotein</keyword>
<keyword id="KW-0689">Ribosomal protein</keyword>
<keyword id="KW-0694">RNA-binding</keyword>
<keyword id="KW-0699">rRNA-binding</keyword>
<name>RL6_CLOBJ</name>
<accession>C1FMT6</accession>
<gene>
    <name evidence="1" type="primary">rplF</name>
    <name type="ordered locus">CLM_3933</name>
</gene>
<organism>
    <name type="scientific">Clostridium botulinum (strain Kyoto / Type A2)</name>
    <dbReference type="NCBI Taxonomy" id="536232"/>
    <lineage>
        <taxon>Bacteria</taxon>
        <taxon>Bacillati</taxon>
        <taxon>Bacillota</taxon>
        <taxon>Clostridia</taxon>
        <taxon>Eubacteriales</taxon>
        <taxon>Clostridiaceae</taxon>
        <taxon>Clostridium</taxon>
    </lineage>
</organism>
<comment type="function">
    <text evidence="1">This protein binds to the 23S rRNA, and is important in its secondary structure. It is located near the subunit interface in the base of the L7/L12 stalk, and near the tRNA binding site of the peptidyltransferase center.</text>
</comment>
<comment type="subunit">
    <text evidence="1">Part of the 50S ribosomal subunit.</text>
</comment>
<comment type="similarity">
    <text evidence="1">Belongs to the universal ribosomal protein uL6 family.</text>
</comment>
<dbReference type="EMBL" id="CP001581">
    <property type="protein sequence ID" value="ACO83614.1"/>
    <property type="molecule type" value="Genomic_DNA"/>
</dbReference>
<dbReference type="RefSeq" id="WP_003357306.1">
    <property type="nucleotide sequence ID" value="NC_012563.1"/>
</dbReference>
<dbReference type="SMR" id="C1FMT6"/>
<dbReference type="GeneID" id="5187721"/>
<dbReference type="KEGG" id="cby:CLM_3933"/>
<dbReference type="eggNOG" id="COG0097">
    <property type="taxonomic scope" value="Bacteria"/>
</dbReference>
<dbReference type="HOGENOM" id="CLU_065464_1_2_9"/>
<dbReference type="Proteomes" id="UP000001374">
    <property type="component" value="Chromosome"/>
</dbReference>
<dbReference type="GO" id="GO:0022625">
    <property type="term" value="C:cytosolic large ribosomal subunit"/>
    <property type="evidence" value="ECO:0007669"/>
    <property type="project" value="TreeGrafter"/>
</dbReference>
<dbReference type="GO" id="GO:0019843">
    <property type="term" value="F:rRNA binding"/>
    <property type="evidence" value="ECO:0007669"/>
    <property type="project" value="UniProtKB-UniRule"/>
</dbReference>
<dbReference type="GO" id="GO:0003735">
    <property type="term" value="F:structural constituent of ribosome"/>
    <property type="evidence" value="ECO:0007669"/>
    <property type="project" value="InterPro"/>
</dbReference>
<dbReference type="GO" id="GO:0002181">
    <property type="term" value="P:cytoplasmic translation"/>
    <property type="evidence" value="ECO:0007669"/>
    <property type="project" value="TreeGrafter"/>
</dbReference>
<dbReference type="FunFam" id="3.90.930.12:FF:000001">
    <property type="entry name" value="50S ribosomal protein L6"/>
    <property type="match status" value="1"/>
</dbReference>
<dbReference type="FunFam" id="3.90.930.12:FF:000002">
    <property type="entry name" value="50S ribosomal protein L6"/>
    <property type="match status" value="1"/>
</dbReference>
<dbReference type="Gene3D" id="3.90.930.12">
    <property type="entry name" value="Ribosomal protein L6, alpha-beta domain"/>
    <property type="match status" value="2"/>
</dbReference>
<dbReference type="HAMAP" id="MF_01365_B">
    <property type="entry name" value="Ribosomal_uL6_B"/>
    <property type="match status" value="1"/>
</dbReference>
<dbReference type="InterPro" id="IPR000702">
    <property type="entry name" value="Ribosomal_uL6-like"/>
</dbReference>
<dbReference type="InterPro" id="IPR036789">
    <property type="entry name" value="Ribosomal_uL6-like_a/b-dom_sf"/>
</dbReference>
<dbReference type="InterPro" id="IPR020040">
    <property type="entry name" value="Ribosomal_uL6_a/b-dom"/>
</dbReference>
<dbReference type="InterPro" id="IPR019906">
    <property type="entry name" value="Ribosomal_uL6_bac-type"/>
</dbReference>
<dbReference type="InterPro" id="IPR002358">
    <property type="entry name" value="Ribosomal_uL6_CS"/>
</dbReference>
<dbReference type="NCBIfam" id="TIGR03654">
    <property type="entry name" value="L6_bact"/>
    <property type="match status" value="1"/>
</dbReference>
<dbReference type="PANTHER" id="PTHR11655">
    <property type="entry name" value="60S/50S RIBOSOMAL PROTEIN L6/L9"/>
    <property type="match status" value="1"/>
</dbReference>
<dbReference type="PANTHER" id="PTHR11655:SF14">
    <property type="entry name" value="LARGE RIBOSOMAL SUBUNIT PROTEIN UL6M"/>
    <property type="match status" value="1"/>
</dbReference>
<dbReference type="Pfam" id="PF00347">
    <property type="entry name" value="Ribosomal_L6"/>
    <property type="match status" value="2"/>
</dbReference>
<dbReference type="PIRSF" id="PIRSF002162">
    <property type="entry name" value="Ribosomal_L6"/>
    <property type="match status" value="1"/>
</dbReference>
<dbReference type="PRINTS" id="PR00059">
    <property type="entry name" value="RIBOSOMALL6"/>
</dbReference>
<dbReference type="SUPFAM" id="SSF56053">
    <property type="entry name" value="Ribosomal protein L6"/>
    <property type="match status" value="2"/>
</dbReference>
<dbReference type="PROSITE" id="PS00525">
    <property type="entry name" value="RIBOSOMAL_L6_1"/>
    <property type="match status" value="1"/>
</dbReference>
<evidence type="ECO:0000255" key="1">
    <source>
        <dbReference type="HAMAP-Rule" id="MF_01365"/>
    </source>
</evidence>
<evidence type="ECO:0000305" key="2"/>